<keyword id="KW-0067">ATP-binding</keyword>
<keyword id="KW-0173">Coenzyme A biosynthesis</keyword>
<keyword id="KW-0963">Cytoplasm</keyword>
<keyword id="KW-0460">Magnesium</keyword>
<keyword id="KW-0547">Nucleotide-binding</keyword>
<keyword id="KW-0548">Nucleotidyltransferase</keyword>
<keyword id="KW-0808">Transferase</keyword>
<reference key="1">
    <citation type="journal article" date="2008" name="J. Bacteriol.">
        <title>Genome sequence of a nephritogenic and highly transformable M49 strain of Streptococcus pyogenes.</title>
        <authorList>
            <person name="McShan W.M."/>
            <person name="Ferretti J.J."/>
            <person name="Karasawa T."/>
            <person name="Suvorov A.N."/>
            <person name="Lin S."/>
            <person name="Qin B."/>
            <person name="Jia H."/>
            <person name="Kenton S."/>
            <person name="Najar F."/>
            <person name="Wu H."/>
            <person name="Scott J."/>
            <person name="Roe B.A."/>
            <person name="Savic D.J."/>
        </authorList>
    </citation>
    <scope>NUCLEOTIDE SEQUENCE [LARGE SCALE GENOMIC DNA]</scope>
    <source>
        <strain>NZ131</strain>
    </source>
</reference>
<gene>
    <name evidence="1" type="primary">coaD</name>
    <name type="ordered locus">Spy49_1189c</name>
</gene>
<protein>
    <recommendedName>
        <fullName evidence="1">Phosphopantetheine adenylyltransferase</fullName>
        <ecNumber evidence="1">2.7.7.3</ecNumber>
    </recommendedName>
    <alternativeName>
        <fullName evidence="1">Dephospho-CoA pyrophosphorylase</fullName>
    </alternativeName>
    <alternativeName>
        <fullName evidence="1">Pantetheine-phosphate adenylyltransferase</fullName>
        <shortName evidence="1">PPAT</shortName>
    </alternativeName>
</protein>
<organism>
    <name type="scientific">Streptococcus pyogenes serotype M49 (strain NZ131)</name>
    <dbReference type="NCBI Taxonomy" id="471876"/>
    <lineage>
        <taxon>Bacteria</taxon>
        <taxon>Bacillati</taxon>
        <taxon>Bacillota</taxon>
        <taxon>Bacilli</taxon>
        <taxon>Lactobacillales</taxon>
        <taxon>Streptococcaceae</taxon>
        <taxon>Streptococcus</taxon>
    </lineage>
</organism>
<feature type="chain" id="PRO_1000096849" description="Phosphopantetheine adenylyltransferase">
    <location>
        <begin position="1"/>
        <end position="163"/>
    </location>
</feature>
<feature type="binding site" evidence="1">
    <location>
        <begin position="11"/>
        <end position="12"/>
    </location>
    <ligand>
        <name>ATP</name>
        <dbReference type="ChEBI" id="CHEBI:30616"/>
    </ligand>
</feature>
<feature type="binding site" evidence="1">
    <location>
        <position position="11"/>
    </location>
    <ligand>
        <name>substrate</name>
    </ligand>
</feature>
<feature type="binding site" evidence="1">
    <location>
        <position position="19"/>
    </location>
    <ligand>
        <name>ATP</name>
        <dbReference type="ChEBI" id="CHEBI:30616"/>
    </ligand>
</feature>
<feature type="binding site" evidence="1">
    <location>
        <position position="43"/>
    </location>
    <ligand>
        <name>substrate</name>
    </ligand>
</feature>
<feature type="binding site" evidence="1">
    <location>
        <position position="76"/>
    </location>
    <ligand>
        <name>substrate</name>
    </ligand>
</feature>
<feature type="binding site" evidence="1">
    <location>
        <position position="90"/>
    </location>
    <ligand>
        <name>substrate</name>
    </ligand>
</feature>
<feature type="binding site" evidence="1">
    <location>
        <begin position="91"/>
        <end position="93"/>
    </location>
    <ligand>
        <name>ATP</name>
        <dbReference type="ChEBI" id="CHEBI:30616"/>
    </ligand>
</feature>
<feature type="binding site" evidence="1">
    <location>
        <position position="101"/>
    </location>
    <ligand>
        <name>ATP</name>
        <dbReference type="ChEBI" id="CHEBI:30616"/>
    </ligand>
</feature>
<feature type="binding site" evidence="1">
    <location>
        <begin position="126"/>
        <end position="132"/>
    </location>
    <ligand>
        <name>ATP</name>
        <dbReference type="ChEBI" id="CHEBI:30616"/>
    </ligand>
</feature>
<feature type="site" description="Transition state stabilizer" evidence="1">
    <location>
        <position position="19"/>
    </location>
</feature>
<evidence type="ECO:0000255" key="1">
    <source>
        <dbReference type="HAMAP-Rule" id="MF_00151"/>
    </source>
</evidence>
<sequence length="163" mass="18629">MLTKIGLYTGSFDPVTNGHLDIVKRASGLFDQIYVGIFDNPTKKSYFKLEVRKAMLTQALADFTNVIVVTSHERLAIDVAKELRVTHLIRGLRNATDFEYEENLEYFNHLLAPNIETVYLISRNKWQALSSSRVRELIHFQSSLEGLVPQSVIAQVEKMNEKT</sequence>
<dbReference type="EC" id="2.7.7.3" evidence="1"/>
<dbReference type="EMBL" id="CP000829">
    <property type="protein sequence ID" value="ACI61477.1"/>
    <property type="molecule type" value="Genomic_DNA"/>
</dbReference>
<dbReference type="SMR" id="B5XMB5"/>
<dbReference type="KEGG" id="soz:Spy49_1189c"/>
<dbReference type="HOGENOM" id="CLU_100149_0_1_9"/>
<dbReference type="UniPathway" id="UPA00241">
    <property type="reaction ID" value="UER00355"/>
</dbReference>
<dbReference type="Proteomes" id="UP000001039">
    <property type="component" value="Chromosome"/>
</dbReference>
<dbReference type="GO" id="GO:0005737">
    <property type="term" value="C:cytoplasm"/>
    <property type="evidence" value="ECO:0007669"/>
    <property type="project" value="UniProtKB-SubCell"/>
</dbReference>
<dbReference type="GO" id="GO:0005524">
    <property type="term" value="F:ATP binding"/>
    <property type="evidence" value="ECO:0007669"/>
    <property type="project" value="UniProtKB-KW"/>
</dbReference>
<dbReference type="GO" id="GO:0004595">
    <property type="term" value="F:pantetheine-phosphate adenylyltransferase activity"/>
    <property type="evidence" value="ECO:0007669"/>
    <property type="project" value="UniProtKB-UniRule"/>
</dbReference>
<dbReference type="GO" id="GO:0015937">
    <property type="term" value="P:coenzyme A biosynthetic process"/>
    <property type="evidence" value="ECO:0007669"/>
    <property type="project" value="UniProtKB-UniRule"/>
</dbReference>
<dbReference type="CDD" id="cd02163">
    <property type="entry name" value="PPAT"/>
    <property type="match status" value="1"/>
</dbReference>
<dbReference type="Gene3D" id="3.40.50.620">
    <property type="entry name" value="HUPs"/>
    <property type="match status" value="1"/>
</dbReference>
<dbReference type="HAMAP" id="MF_00151">
    <property type="entry name" value="PPAT_bact"/>
    <property type="match status" value="1"/>
</dbReference>
<dbReference type="InterPro" id="IPR004821">
    <property type="entry name" value="Cyt_trans-like"/>
</dbReference>
<dbReference type="InterPro" id="IPR001980">
    <property type="entry name" value="PPAT"/>
</dbReference>
<dbReference type="InterPro" id="IPR014729">
    <property type="entry name" value="Rossmann-like_a/b/a_fold"/>
</dbReference>
<dbReference type="NCBIfam" id="TIGR01510">
    <property type="entry name" value="coaD_prev_kdtB"/>
    <property type="match status" value="1"/>
</dbReference>
<dbReference type="NCBIfam" id="TIGR00125">
    <property type="entry name" value="cyt_tran_rel"/>
    <property type="match status" value="1"/>
</dbReference>
<dbReference type="PANTHER" id="PTHR21342">
    <property type="entry name" value="PHOSPHOPANTETHEINE ADENYLYLTRANSFERASE"/>
    <property type="match status" value="1"/>
</dbReference>
<dbReference type="PANTHER" id="PTHR21342:SF1">
    <property type="entry name" value="PHOSPHOPANTETHEINE ADENYLYLTRANSFERASE"/>
    <property type="match status" value="1"/>
</dbReference>
<dbReference type="Pfam" id="PF01467">
    <property type="entry name" value="CTP_transf_like"/>
    <property type="match status" value="1"/>
</dbReference>
<dbReference type="PRINTS" id="PR01020">
    <property type="entry name" value="LPSBIOSNTHSS"/>
</dbReference>
<dbReference type="SUPFAM" id="SSF52374">
    <property type="entry name" value="Nucleotidylyl transferase"/>
    <property type="match status" value="1"/>
</dbReference>
<proteinExistence type="inferred from homology"/>
<comment type="function">
    <text evidence="1">Reversibly transfers an adenylyl group from ATP to 4'-phosphopantetheine, yielding dephospho-CoA (dPCoA) and pyrophosphate.</text>
</comment>
<comment type="catalytic activity">
    <reaction evidence="1">
        <text>(R)-4'-phosphopantetheine + ATP + H(+) = 3'-dephospho-CoA + diphosphate</text>
        <dbReference type="Rhea" id="RHEA:19801"/>
        <dbReference type="ChEBI" id="CHEBI:15378"/>
        <dbReference type="ChEBI" id="CHEBI:30616"/>
        <dbReference type="ChEBI" id="CHEBI:33019"/>
        <dbReference type="ChEBI" id="CHEBI:57328"/>
        <dbReference type="ChEBI" id="CHEBI:61723"/>
        <dbReference type="EC" id="2.7.7.3"/>
    </reaction>
</comment>
<comment type="cofactor">
    <cofactor evidence="1">
        <name>Mg(2+)</name>
        <dbReference type="ChEBI" id="CHEBI:18420"/>
    </cofactor>
</comment>
<comment type="pathway">
    <text evidence="1">Cofactor biosynthesis; coenzyme A biosynthesis; CoA from (R)-pantothenate: step 4/5.</text>
</comment>
<comment type="subunit">
    <text evidence="1">Homohexamer.</text>
</comment>
<comment type="subcellular location">
    <subcellularLocation>
        <location evidence="1">Cytoplasm</location>
    </subcellularLocation>
</comment>
<comment type="similarity">
    <text evidence="1">Belongs to the bacterial CoaD family.</text>
</comment>
<accession>B5XMB5</accession>
<name>COAD_STRPZ</name>